<proteinExistence type="evidence at transcript level"/>
<organism>
    <name type="scientific">Gallus gallus</name>
    <name type="common">Chicken</name>
    <dbReference type="NCBI Taxonomy" id="9031"/>
    <lineage>
        <taxon>Eukaryota</taxon>
        <taxon>Metazoa</taxon>
        <taxon>Chordata</taxon>
        <taxon>Craniata</taxon>
        <taxon>Vertebrata</taxon>
        <taxon>Euteleostomi</taxon>
        <taxon>Archelosauria</taxon>
        <taxon>Archosauria</taxon>
        <taxon>Dinosauria</taxon>
        <taxon>Saurischia</taxon>
        <taxon>Theropoda</taxon>
        <taxon>Coelurosauria</taxon>
        <taxon>Aves</taxon>
        <taxon>Neognathae</taxon>
        <taxon>Galloanserae</taxon>
        <taxon>Galliformes</taxon>
        <taxon>Phasianidae</taxon>
        <taxon>Phasianinae</taxon>
        <taxon>Gallus</taxon>
    </lineage>
</organism>
<gene>
    <name evidence="3" type="primary">ADSS2</name>
    <name evidence="3" type="synonym">ADSS</name>
    <name type="ORF">RCJMB04_17e23</name>
</gene>
<feature type="chain" id="PRO_0000398882" description="Adenylosuccinate synthetase isozyme 2">
    <location>
        <begin position="1"/>
        <end position="451"/>
    </location>
</feature>
<feature type="active site" description="Proton acceptor" evidence="3">
    <location>
        <position position="35"/>
    </location>
</feature>
<feature type="active site" description="Proton donor" evidence="3">
    <location>
        <position position="63"/>
    </location>
</feature>
<feature type="binding site" evidence="3">
    <location>
        <begin position="34"/>
        <end position="40"/>
    </location>
    <ligand>
        <name>GTP</name>
        <dbReference type="ChEBI" id="CHEBI:37565"/>
    </ligand>
</feature>
<feature type="binding site" description="in other chain" evidence="3">
    <location>
        <begin position="35"/>
        <end position="38"/>
    </location>
    <ligand>
        <name>IMP</name>
        <dbReference type="ChEBI" id="CHEBI:58053"/>
        <note>ligand shared between dimeric partners</note>
    </ligand>
</feature>
<feature type="binding site" evidence="3">
    <location>
        <position position="35"/>
    </location>
    <ligand>
        <name>Mg(2+)</name>
        <dbReference type="ChEBI" id="CHEBI:18420"/>
    </ligand>
</feature>
<feature type="binding site" evidence="3">
    <location>
        <position position="35"/>
    </location>
    <ligand>
        <name>substrate</name>
    </ligand>
</feature>
<feature type="binding site" description="in other chain" evidence="3">
    <location>
        <begin position="60"/>
        <end position="63"/>
    </location>
    <ligand>
        <name>IMP</name>
        <dbReference type="ChEBI" id="CHEBI:58053"/>
        <note>ligand shared between dimeric partners</note>
    </ligand>
</feature>
<feature type="binding site" evidence="3">
    <location>
        <begin position="62"/>
        <end position="64"/>
    </location>
    <ligand>
        <name>GTP</name>
        <dbReference type="ChEBI" id="CHEBI:37565"/>
    </ligand>
</feature>
<feature type="binding site" evidence="3">
    <location>
        <position position="62"/>
    </location>
    <ligand>
        <name>Mg(2+)</name>
        <dbReference type="ChEBI" id="CHEBI:18420"/>
    </ligand>
</feature>
<feature type="binding site" description="in other chain" evidence="3">
    <location>
        <position position="157"/>
    </location>
    <ligand>
        <name>IMP</name>
        <dbReference type="ChEBI" id="CHEBI:58053"/>
        <note>ligand shared between dimeric partners</note>
    </ligand>
</feature>
<feature type="binding site" evidence="3">
    <location>
        <position position="171"/>
    </location>
    <ligand>
        <name>IMP</name>
        <dbReference type="ChEBI" id="CHEBI:58053"/>
        <note>ligand shared between dimeric partners</note>
    </ligand>
</feature>
<feature type="binding site" description="in other chain" evidence="3">
    <location>
        <position position="250"/>
    </location>
    <ligand>
        <name>IMP</name>
        <dbReference type="ChEBI" id="CHEBI:58053"/>
        <note>ligand shared between dimeric partners</note>
    </ligand>
</feature>
<feature type="binding site" description="in other chain" evidence="3">
    <location>
        <position position="265"/>
    </location>
    <ligand>
        <name>IMP</name>
        <dbReference type="ChEBI" id="CHEBI:58053"/>
        <note>ligand shared between dimeric partners</note>
    </ligand>
</feature>
<feature type="binding site" evidence="3">
    <location>
        <begin position="325"/>
        <end position="331"/>
    </location>
    <ligand>
        <name>substrate</name>
    </ligand>
</feature>
<feature type="binding site" description="in other chain" evidence="3">
    <location>
        <position position="329"/>
    </location>
    <ligand>
        <name>IMP</name>
        <dbReference type="ChEBI" id="CHEBI:58053"/>
        <note>ligand shared between dimeric partners</note>
    </ligand>
</feature>
<feature type="binding site" evidence="3">
    <location>
        <position position="331"/>
    </location>
    <ligand>
        <name>GTP</name>
        <dbReference type="ChEBI" id="CHEBI:37565"/>
    </ligand>
</feature>
<feature type="binding site" evidence="3">
    <location>
        <begin position="357"/>
        <end position="359"/>
    </location>
    <ligand>
        <name>GTP</name>
        <dbReference type="ChEBI" id="CHEBI:37565"/>
    </ligand>
</feature>
<feature type="binding site" evidence="3">
    <location>
        <begin position="439"/>
        <end position="442"/>
    </location>
    <ligand>
        <name>GTP</name>
        <dbReference type="ChEBI" id="CHEBI:37565"/>
    </ligand>
</feature>
<dbReference type="EC" id="6.3.4.4" evidence="3"/>
<dbReference type="EMBL" id="AJ720419">
    <property type="protein sequence ID" value="CAG32078.1"/>
    <property type="molecule type" value="mRNA"/>
</dbReference>
<dbReference type="RefSeq" id="NP_001026692.1">
    <property type="nucleotide sequence ID" value="NM_001031521.2"/>
</dbReference>
<dbReference type="SMR" id="Q5ZJL5"/>
<dbReference type="FunCoup" id="Q5ZJL5">
    <property type="interactions" value="2015"/>
</dbReference>
<dbReference type="STRING" id="9031.ENSGALP00000017386"/>
<dbReference type="PaxDb" id="9031-ENSGALP00000017386"/>
<dbReference type="GeneID" id="428579"/>
<dbReference type="KEGG" id="gga:428579"/>
<dbReference type="CTD" id="159"/>
<dbReference type="VEuPathDB" id="HostDB:geneid_428579"/>
<dbReference type="eggNOG" id="KOG1355">
    <property type="taxonomic scope" value="Eukaryota"/>
</dbReference>
<dbReference type="HOGENOM" id="CLU_029848_3_0_1"/>
<dbReference type="InParanoid" id="Q5ZJL5"/>
<dbReference type="OMA" id="FHHAKPI"/>
<dbReference type="OrthoDB" id="10265645at2759"/>
<dbReference type="PhylomeDB" id="Q5ZJL5"/>
<dbReference type="Reactome" id="R-GGA-421203">
    <property type="pathway name" value="De novo synthesis of AMP"/>
</dbReference>
<dbReference type="UniPathway" id="UPA00075">
    <property type="reaction ID" value="UER00335"/>
</dbReference>
<dbReference type="PRO" id="PR:Q5ZJL5"/>
<dbReference type="Proteomes" id="UP000000539">
    <property type="component" value="Unassembled WGS sequence"/>
</dbReference>
<dbReference type="GO" id="GO:0005737">
    <property type="term" value="C:cytoplasm"/>
    <property type="evidence" value="ECO:0000318"/>
    <property type="project" value="GO_Central"/>
</dbReference>
<dbReference type="GO" id="GO:0005739">
    <property type="term" value="C:mitochondrion"/>
    <property type="evidence" value="ECO:0000250"/>
    <property type="project" value="UniProtKB"/>
</dbReference>
<dbReference type="GO" id="GO:0004019">
    <property type="term" value="F:adenylosuccinate synthase activity"/>
    <property type="evidence" value="ECO:0000318"/>
    <property type="project" value="GO_Central"/>
</dbReference>
<dbReference type="GO" id="GO:0005525">
    <property type="term" value="F:GTP binding"/>
    <property type="evidence" value="ECO:0007669"/>
    <property type="project" value="UniProtKB-UniRule"/>
</dbReference>
<dbReference type="GO" id="GO:0000287">
    <property type="term" value="F:magnesium ion binding"/>
    <property type="evidence" value="ECO:0007669"/>
    <property type="project" value="UniProtKB-UniRule"/>
</dbReference>
<dbReference type="GO" id="GO:0044208">
    <property type="term" value="P:'de novo' AMP biosynthetic process"/>
    <property type="evidence" value="ECO:0000318"/>
    <property type="project" value="GO_Central"/>
</dbReference>
<dbReference type="GO" id="GO:0046040">
    <property type="term" value="P:IMP metabolic process"/>
    <property type="evidence" value="ECO:0000318"/>
    <property type="project" value="GO_Central"/>
</dbReference>
<dbReference type="CDD" id="cd03108">
    <property type="entry name" value="AdSS"/>
    <property type="match status" value="1"/>
</dbReference>
<dbReference type="FunFam" id="3.90.170.10:FF:000001">
    <property type="entry name" value="Adenylosuccinate synthetase"/>
    <property type="match status" value="1"/>
</dbReference>
<dbReference type="FunFam" id="1.10.300.10:FF:000002">
    <property type="entry name" value="Adenylosuccinate synthetase, chloroplastic"/>
    <property type="match status" value="1"/>
</dbReference>
<dbReference type="Gene3D" id="3.40.440.10">
    <property type="entry name" value="Adenylosuccinate Synthetase, subunit A, domain 1"/>
    <property type="match status" value="1"/>
</dbReference>
<dbReference type="Gene3D" id="1.10.300.10">
    <property type="entry name" value="Adenylosuccinate Synthetase, subunit A, domain 2"/>
    <property type="match status" value="1"/>
</dbReference>
<dbReference type="Gene3D" id="3.90.170.10">
    <property type="entry name" value="Adenylosuccinate Synthetase, subunit A, domain 3"/>
    <property type="match status" value="1"/>
</dbReference>
<dbReference type="HAMAP" id="MF_00011">
    <property type="entry name" value="Adenylosucc_synth"/>
    <property type="match status" value="1"/>
</dbReference>
<dbReference type="HAMAP" id="MF_03127">
    <property type="entry name" value="Adenylosucc_synth_vert_acid"/>
    <property type="match status" value="1"/>
</dbReference>
<dbReference type="InterPro" id="IPR018220">
    <property type="entry name" value="Adenylosuccin_syn_GTP-bd"/>
</dbReference>
<dbReference type="InterPro" id="IPR033128">
    <property type="entry name" value="Adenylosuccin_syn_Lys_AS"/>
</dbReference>
<dbReference type="InterPro" id="IPR042109">
    <property type="entry name" value="Adenylosuccinate_synth_dom1"/>
</dbReference>
<dbReference type="InterPro" id="IPR042110">
    <property type="entry name" value="Adenylosuccinate_synth_dom2"/>
</dbReference>
<dbReference type="InterPro" id="IPR042111">
    <property type="entry name" value="Adenylosuccinate_synth_dom3"/>
</dbReference>
<dbReference type="InterPro" id="IPR001114">
    <property type="entry name" value="Adenylosuccinate_synthetase"/>
</dbReference>
<dbReference type="InterPro" id="IPR027529">
    <property type="entry name" value="AdSS_2_vert"/>
</dbReference>
<dbReference type="InterPro" id="IPR027417">
    <property type="entry name" value="P-loop_NTPase"/>
</dbReference>
<dbReference type="NCBIfam" id="NF002223">
    <property type="entry name" value="PRK01117.1"/>
    <property type="match status" value="1"/>
</dbReference>
<dbReference type="NCBIfam" id="TIGR00184">
    <property type="entry name" value="purA"/>
    <property type="match status" value="1"/>
</dbReference>
<dbReference type="PANTHER" id="PTHR11846">
    <property type="entry name" value="ADENYLOSUCCINATE SYNTHETASE"/>
    <property type="match status" value="1"/>
</dbReference>
<dbReference type="PANTHER" id="PTHR11846:SF13">
    <property type="entry name" value="ADENYLOSUCCINATE SYNTHETASE ISOZYME 2"/>
    <property type="match status" value="1"/>
</dbReference>
<dbReference type="Pfam" id="PF00709">
    <property type="entry name" value="Adenylsucc_synt"/>
    <property type="match status" value="1"/>
</dbReference>
<dbReference type="SMART" id="SM00788">
    <property type="entry name" value="Adenylsucc_synt"/>
    <property type="match status" value="1"/>
</dbReference>
<dbReference type="SUPFAM" id="SSF52540">
    <property type="entry name" value="P-loop containing nucleoside triphosphate hydrolases"/>
    <property type="match status" value="1"/>
</dbReference>
<dbReference type="PROSITE" id="PS01266">
    <property type="entry name" value="ADENYLOSUCCIN_SYN_1"/>
    <property type="match status" value="1"/>
</dbReference>
<dbReference type="PROSITE" id="PS00513">
    <property type="entry name" value="ADENYLOSUCCIN_SYN_2"/>
    <property type="match status" value="1"/>
</dbReference>
<evidence type="ECO:0000250" key="1">
    <source>
        <dbReference type="UniProtKB" id="A4Z6H1"/>
    </source>
</evidence>
<evidence type="ECO:0000250" key="2">
    <source>
        <dbReference type="UniProtKB" id="P46664"/>
    </source>
</evidence>
<evidence type="ECO:0000255" key="3">
    <source>
        <dbReference type="HAMAP-Rule" id="MF_03127"/>
    </source>
</evidence>
<comment type="function">
    <text evidence="2">Plays an important role in the de novo pathway and in the salvage pathway of purine nucleotide biosynthesis. Catalyzes the first committed step in the biosynthesis of AMP from IMP.</text>
</comment>
<comment type="catalytic activity">
    <reaction evidence="3">
        <text>IMP + L-aspartate + GTP = N(6)-(1,2-dicarboxyethyl)-AMP + GDP + phosphate + 2 H(+)</text>
        <dbReference type="Rhea" id="RHEA:15753"/>
        <dbReference type="ChEBI" id="CHEBI:15378"/>
        <dbReference type="ChEBI" id="CHEBI:29991"/>
        <dbReference type="ChEBI" id="CHEBI:37565"/>
        <dbReference type="ChEBI" id="CHEBI:43474"/>
        <dbReference type="ChEBI" id="CHEBI:57567"/>
        <dbReference type="ChEBI" id="CHEBI:58053"/>
        <dbReference type="ChEBI" id="CHEBI:58189"/>
        <dbReference type="EC" id="6.3.4.4"/>
    </reaction>
</comment>
<comment type="cofactor">
    <cofactor evidence="3">
        <name>Mg(2+)</name>
        <dbReference type="ChEBI" id="CHEBI:18420"/>
    </cofactor>
    <text evidence="3">Binds 1 Mg(2+) ion per subunit.</text>
</comment>
<comment type="activity regulation">
    <text evidence="2">Inhibited competitively by AMP and IMP and non-competitively by fructose 1,6-bisphosphate.</text>
</comment>
<comment type="pathway">
    <text evidence="3">Purine metabolism; AMP biosynthesis via de novo pathway; AMP from IMP: step 1/2.</text>
</comment>
<comment type="subunit">
    <text evidence="3">Homodimer.</text>
</comment>
<comment type="subcellular location">
    <subcellularLocation>
        <location evidence="3">Cytoplasm</location>
    </subcellularLocation>
    <subcellularLocation>
        <location evidence="1">Mitochondrion</location>
    </subcellularLocation>
</comment>
<comment type="similarity">
    <text evidence="3">Belongs to the adenylosuccinate synthetase family.</text>
</comment>
<sequence length="451" mass="49455">MAEHGAPAPAIPNGGCAARLPGNKVTVVLGAQWGDEGKGKVVDLLAQDADIVCRCQGGNNAGHTVVVDSVEYDFHLLPSGIINPKVTAFIGNGVVIHLPGLFEETEKNLKKGKGLEGWEKRLVISDRAHIVFDFHQAADGIQEQQRQEQAGKNLGTTKKGIGPVYSSKAARSGLRMCDLVSDFDEFSERFKVLANQYKAIYPTLEIDIEGELKKLKAYMEKVKPMVKDGVYFMYEALHGPPKKILVEGANAALLDIDFGTYPFVTSSNCTVGGVCTGLGMPPQNVGEVYGVVKAYTTRVGIGAFPTEQDNEIGELLQMRGKEFGVTTGRKRRCGWLDLVQLRYAYMINGFTALALTKLDILDVFPEIKVGVAYKLDGEVIPHFPANHEVLSKVEVKYETLPGWDTDISNARTFDELPVNAQNYVRFIEMELGVPVKWIGVGKSRESMIQLF</sequence>
<protein>
    <recommendedName>
        <fullName evidence="3">Adenylosuccinate synthetase isozyme 2</fullName>
        <shortName evidence="3">AMPSase 2</shortName>
        <shortName evidence="3">AdSS 2</shortName>
        <ecNumber evidence="3">6.3.4.4</ecNumber>
    </recommendedName>
    <alternativeName>
        <fullName evidence="3">Adenylosuccinate synthetase, acidic isozyme</fullName>
    </alternativeName>
    <alternativeName>
        <fullName evidence="3">Adenylosuccinate synthetase, liver isozyme</fullName>
        <shortName evidence="3">L-type adenylosuccinate synthetase</shortName>
    </alternativeName>
    <alternativeName>
        <fullName evidence="3">IMP--aspartate ligase 2</fullName>
    </alternativeName>
</protein>
<reference key="1">
    <citation type="journal article" date="2005" name="Genome Biol.">
        <title>Full-length cDNAs from chicken bursal lymphocytes to facilitate gene function analysis.</title>
        <authorList>
            <person name="Caldwell R.B."/>
            <person name="Kierzek A.M."/>
            <person name="Arakawa H."/>
            <person name="Bezzubov Y."/>
            <person name="Zaim J."/>
            <person name="Fiedler P."/>
            <person name="Kutter S."/>
            <person name="Blagodatski A."/>
            <person name="Kostovska D."/>
            <person name="Koter M."/>
            <person name="Plachy J."/>
            <person name="Carninci P."/>
            <person name="Hayashizaki Y."/>
            <person name="Buerstedde J.-M."/>
        </authorList>
    </citation>
    <scope>NUCLEOTIDE SEQUENCE [LARGE SCALE MRNA]</scope>
    <source>
        <strain>CB</strain>
        <tissue>Bursa of Fabricius</tissue>
    </source>
</reference>
<keyword id="KW-0963">Cytoplasm</keyword>
<keyword id="KW-0342">GTP-binding</keyword>
<keyword id="KW-0436">Ligase</keyword>
<keyword id="KW-0460">Magnesium</keyword>
<keyword id="KW-0479">Metal-binding</keyword>
<keyword id="KW-0496">Mitochondrion</keyword>
<keyword id="KW-0547">Nucleotide-binding</keyword>
<keyword id="KW-0658">Purine biosynthesis</keyword>
<keyword id="KW-1185">Reference proteome</keyword>
<accession>Q5ZJL5</accession>
<name>PURA2_CHICK</name>